<gene>
    <name type="ordered locus">YPR195C</name>
    <name type="ORF">P9677.14</name>
</gene>
<organism>
    <name type="scientific">Saccharomyces cerevisiae (strain ATCC 204508 / S288c)</name>
    <name type="common">Baker's yeast</name>
    <dbReference type="NCBI Taxonomy" id="559292"/>
    <lineage>
        <taxon>Eukaryota</taxon>
        <taxon>Fungi</taxon>
        <taxon>Dikarya</taxon>
        <taxon>Ascomycota</taxon>
        <taxon>Saccharomycotina</taxon>
        <taxon>Saccharomycetes</taxon>
        <taxon>Saccharomycetales</taxon>
        <taxon>Saccharomycetaceae</taxon>
        <taxon>Saccharomyces</taxon>
    </lineage>
</organism>
<sequence length="109" mass="11893">MNSLIPLLVEASTYIVRGESSISIAIGIGPQASRSVPYHILCRGCDGTVTTFRTWHTQPLGPCNTIIIGRKGNETTGGAEQRRQQHLTSDSATKASLVGFCGLYYYFRK</sequence>
<reference key="1">
    <citation type="journal article" date="1997" name="Nature">
        <title>The nucleotide sequence of Saccharomyces cerevisiae chromosome XVI.</title>
        <authorList>
            <person name="Bussey H."/>
            <person name="Storms R.K."/>
            <person name="Ahmed A."/>
            <person name="Albermann K."/>
            <person name="Allen E."/>
            <person name="Ansorge W."/>
            <person name="Araujo R."/>
            <person name="Aparicio A."/>
            <person name="Barrell B.G."/>
            <person name="Badcock K."/>
            <person name="Benes V."/>
            <person name="Botstein D."/>
            <person name="Bowman S."/>
            <person name="Brueckner M."/>
            <person name="Carpenter J."/>
            <person name="Cherry J.M."/>
            <person name="Chung E."/>
            <person name="Churcher C.M."/>
            <person name="Coster F."/>
            <person name="Davis K."/>
            <person name="Davis R.W."/>
            <person name="Dietrich F.S."/>
            <person name="Delius H."/>
            <person name="DiPaolo T."/>
            <person name="Dubois E."/>
            <person name="Duesterhoeft A."/>
            <person name="Duncan M."/>
            <person name="Floeth M."/>
            <person name="Fortin N."/>
            <person name="Friesen J.D."/>
            <person name="Fritz C."/>
            <person name="Goffeau A."/>
            <person name="Hall J."/>
            <person name="Hebling U."/>
            <person name="Heumann K."/>
            <person name="Hilbert H."/>
            <person name="Hillier L.W."/>
            <person name="Hunicke-Smith S."/>
            <person name="Hyman R.W."/>
            <person name="Johnston M."/>
            <person name="Kalman S."/>
            <person name="Kleine K."/>
            <person name="Komp C."/>
            <person name="Kurdi O."/>
            <person name="Lashkari D."/>
            <person name="Lew H."/>
            <person name="Lin A."/>
            <person name="Lin D."/>
            <person name="Louis E.J."/>
            <person name="Marathe R."/>
            <person name="Messenguy F."/>
            <person name="Mewes H.-W."/>
            <person name="Mirtipati S."/>
            <person name="Moestl D."/>
            <person name="Mueller-Auer S."/>
            <person name="Namath A."/>
            <person name="Nentwich U."/>
            <person name="Oefner P."/>
            <person name="Pearson D."/>
            <person name="Petel F.X."/>
            <person name="Pohl T.M."/>
            <person name="Purnelle B."/>
            <person name="Rajandream M.A."/>
            <person name="Rechmann S."/>
            <person name="Rieger M."/>
            <person name="Riles L."/>
            <person name="Roberts D."/>
            <person name="Schaefer M."/>
            <person name="Scharfe M."/>
            <person name="Scherens B."/>
            <person name="Schramm S."/>
            <person name="Schroeder M."/>
            <person name="Sdicu A.-M."/>
            <person name="Tettelin H."/>
            <person name="Urrestarazu L.A."/>
            <person name="Ushinsky S."/>
            <person name="Vierendeels F."/>
            <person name="Vissers S."/>
            <person name="Voss H."/>
            <person name="Walsh S.V."/>
            <person name="Wambutt R."/>
            <person name="Wang Y."/>
            <person name="Wedler E."/>
            <person name="Wedler H."/>
            <person name="Winnett E."/>
            <person name="Zhong W.-W."/>
            <person name="Zollner A."/>
            <person name="Vo D.H."/>
            <person name="Hani J."/>
        </authorList>
    </citation>
    <scope>NUCLEOTIDE SEQUENCE [LARGE SCALE GENOMIC DNA]</scope>
    <source>
        <strain>ATCC 204508 / S288c</strain>
    </source>
</reference>
<reference key="2">
    <citation type="journal article" date="2014" name="G3 (Bethesda)">
        <title>The reference genome sequence of Saccharomyces cerevisiae: Then and now.</title>
        <authorList>
            <person name="Engel S.R."/>
            <person name="Dietrich F.S."/>
            <person name="Fisk D.G."/>
            <person name="Binkley G."/>
            <person name="Balakrishnan R."/>
            <person name="Costanzo M.C."/>
            <person name="Dwight S.S."/>
            <person name="Hitz B.C."/>
            <person name="Karra K."/>
            <person name="Nash R.S."/>
            <person name="Weng S."/>
            <person name="Wong E.D."/>
            <person name="Lloyd P."/>
            <person name="Skrzypek M.S."/>
            <person name="Miyasato S.R."/>
            <person name="Simison M."/>
            <person name="Cherry J.M."/>
        </authorList>
    </citation>
    <scope>GENOME REANNOTATION</scope>
    <source>
        <strain>ATCC 204508 / S288c</strain>
    </source>
</reference>
<protein>
    <recommendedName>
        <fullName>Uncharacterized protein YPR195C</fullName>
    </recommendedName>
</protein>
<dbReference type="EMBL" id="U25841">
    <property type="protein sequence ID" value="AAB64624.1"/>
    <property type="molecule type" value="Genomic_DNA"/>
</dbReference>
<dbReference type="EMBL" id="BK006949">
    <property type="protein sequence ID" value="DAA80347.1"/>
    <property type="molecule type" value="Genomic_DNA"/>
</dbReference>
<dbReference type="PIR" id="S58825">
    <property type="entry name" value="S58825"/>
</dbReference>
<dbReference type="RefSeq" id="NP_001335827.1">
    <property type="nucleotide sequence ID" value="NM_001348889.1"/>
</dbReference>
<dbReference type="FunCoup" id="Q06594">
    <property type="interactions" value="24"/>
</dbReference>
<dbReference type="STRING" id="4932.YPR195C"/>
<dbReference type="PaxDb" id="4932-YPR195C"/>
<dbReference type="EnsemblFungi" id="YPR195C_mRNA">
    <property type="protein sequence ID" value="YPR195C"/>
    <property type="gene ID" value="YPR195C"/>
</dbReference>
<dbReference type="GeneID" id="856325"/>
<dbReference type="AGR" id="SGD:S000006399"/>
<dbReference type="SGD" id="S000006399">
    <property type="gene designation" value="YPR195C"/>
</dbReference>
<dbReference type="HOGENOM" id="CLU_2186036_0_0_1"/>
<dbReference type="InParanoid" id="Q06594"/>
<dbReference type="OrthoDB" id="10294595at2759"/>
<dbReference type="PRO" id="PR:Q06594"/>
<dbReference type="Proteomes" id="UP000002311">
    <property type="component" value="Chromosome XVI"/>
</dbReference>
<dbReference type="RNAct" id="Q06594">
    <property type="molecule type" value="protein"/>
</dbReference>
<name>YP195_YEAST</name>
<accession>Q06594</accession>
<accession>A0A1S0T0D0</accession>
<proteinExistence type="predicted"/>
<keyword id="KW-1185">Reference proteome</keyword>
<feature type="chain" id="PRO_0000299834" description="Uncharacterized protein YPR195C">
    <location>
        <begin position="1"/>
        <end position="109"/>
    </location>
</feature>